<gene>
    <name type="primary">ysgA</name>
    <name type="ordered locus">b3830</name>
    <name type="ordered locus">JW5853</name>
</gene>
<protein>
    <recommendedName>
        <fullName>Putative carboxymethylenebutenolidase</fullName>
        <ecNumber>3.1.1.45</ecNumber>
    </recommendedName>
    <alternativeName>
        <fullName>Dienelactone hydrolase</fullName>
        <shortName>DLH</shortName>
    </alternativeName>
</protein>
<name>DLHH_ECOLI</name>
<organism>
    <name type="scientific">Escherichia coli (strain K12)</name>
    <dbReference type="NCBI Taxonomy" id="83333"/>
    <lineage>
        <taxon>Bacteria</taxon>
        <taxon>Pseudomonadati</taxon>
        <taxon>Pseudomonadota</taxon>
        <taxon>Gammaproteobacteria</taxon>
        <taxon>Enterobacterales</taxon>
        <taxon>Enterobacteriaceae</taxon>
        <taxon>Escherichia</taxon>
    </lineage>
</organism>
<accession>P56262</accession>
<accession>Q2M8D5</accession>
<accession>Q6BEY8</accession>
<evidence type="ECO:0000250" key="1"/>
<evidence type="ECO:0000305" key="2"/>
<dbReference type="EC" id="3.1.1.45"/>
<dbReference type="EMBL" id="U00096">
    <property type="protein sequence ID" value="AAT48226.1"/>
    <property type="molecule type" value="Genomic_DNA"/>
</dbReference>
<dbReference type="EMBL" id="AP009048">
    <property type="protein sequence ID" value="BAE77471.1"/>
    <property type="molecule type" value="Genomic_DNA"/>
</dbReference>
<dbReference type="RefSeq" id="WP_001336442.1">
    <property type="nucleotide sequence ID" value="NZ_SSZK01000046.1"/>
</dbReference>
<dbReference type="RefSeq" id="YP_026268.1">
    <property type="nucleotide sequence ID" value="NC_000913.3"/>
</dbReference>
<dbReference type="SMR" id="P56262"/>
<dbReference type="BioGRID" id="4259478">
    <property type="interactions" value="34"/>
</dbReference>
<dbReference type="DIP" id="DIP-12929N"/>
<dbReference type="FunCoup" id="P56262">
    <property type="interactions" value="486"/>
</dbReference>
<dbReference type="STRING" id="511145.b3830"/>
<dbReference type="ESTHER" id="ecoli-dlhh">
    <property type="family name" value="Dienelactone_hydrolase"/>
</dbReference>
<dbReference type="jPOST" id="P56262"/>
<dbReference type="PaxDb" id="511145-b3830"/>
<dbReference type="EnsemblBacteria" id="AAT48226">
    <property type="protein sequence ID" value="AAT48226"/>
    <property type="gene ID" value="b3830"/>
</dbReference>
<dbReference type="GeneID" id="948320"/>
<dbReference type="KEGG" id="ecj:JW5853"/>
<dbReference type="KEGG" id="eco:b3830"/>
<dbReference type="KEGG" id="ecoc:C3026_20725"/>
<dbReference type="PATRIC" id="fig|511145.12.peg.3946"/>
<dbReference type="EchoBASE" id="EB4067"/>
<dbReference type="eggNOG" id="COG0412">
    <property type="taxonomic scope" value="Bacteria"/>
</dbReference>
<dbReference type="HOGENOM" id="CLU_054590_7_0_6"/>
<dbReference type="InParanoid" id="P56262"/>
<dbReference type="OMA" id="QCGAKHI"/>
<dbReference type="OrthoDB" id="9787933at2"/>
<dbReference type="PhylomeDB" id="P56262"/>
<dbReference type="BioCyc" id="EcoCyc:G7804-MONOMER"/>
<dbReference type="PRO" id="PR:P56262"/>
<dbReference type="Proteomes" id="UP000000625">
    <property type="component" value="Chromosome"/>
</dbReference>
<dbReference type="GO" id="GO:0008806">
    <property type="term" value="F:carboxymethylenebutenolidase activity"/>
    <property type="evidence" value="ECO:0007669"/>
    <property type="project" value="UniProtKB-EC"/>
</dbReference>
<dbReference type="Gene3D" id="3.40.50.1820">
    <property type="entry name" value="alpha/beta hydrolase"/>
    <property type="match status" value="1"/>
</dbReference>
<dbReference type="InterPro" id="IPR029058">
    <property type="entry name" value="AB_hydrolase_fold"/>
</dbReference>
<dbReference type="InterPro" id="IPR002925">
    <property type="entry name" value="Dienelactn_hydro"/>
</dbReference>
<dbReference type="InterPro" id="IPR051049">
    <property type="entry name" value="Dienelactone_hydrolase-like"/>
</dbReference>
<dbReference type="PANTHER" id="PTHR46623:SF6">
    <property type="entry name" value="ALPHA_BETA-HYDROLASES SUPERFAMILY PROTEIN"/>
    <property type="match status" value="1"/>
</dbReference>
<dbReference type="PANTHER" id="PTHR46623">
    <property type="entry name" value="CARBOXYMETHYLENEBUTENOLIDASE-RELATED"/>
    <property type="match status" value="1"/>
</dbReference>
<dbReference type="Pfam" id="PF01738">
    <property type="entry name" value="DLH"/>
    <property type="match status" value="1"/>
</dbReference>
<dbReference type="SUPFAM" id="SSF53474">
    <property type="entry name" value="alpha/beta-Hydrolases"/>
    <property type="match status" value="1"/>
</dbReference>
<comment type="catalytic activity">
    <reaction>
        <text>2-(5-oxo-2,5-dihydrofuran-2-ylidene)acetate + H2O = 4-oxohex-2-enedioate + H(+)</text>
        <dbReference type="Rhea" id="RHEA:12372"/>
        <dbReference type="ChEBI" id="CHEBI:12040"/>
        <dbReference type="ChEBI" id="CHEBI:15377"/>
        <dbReference type="ChEBI" id="CHEBI:15378"/>
        <dbReference type="ChEBI" id="CHEBI:57263"/>
        <dbReference type="EC" id="3.1.1.45"/>
    </reaction>
</comment>
<comment type="similarity">
    <text evidence="2">Belongs to the dienelactone hydrolase family.</text>
</comment>
<feature type="chain" id="PRO_0000161578" description="Putative carboxymethylenebutenolidase">
    <location>
        <begin position="1"/>
        <end position="271"/>
    </location>
</feature>
<feature type="active site" evidence="1">
    <location>
        <position position="147"/>
    </location>
</feature>
<feature type="active site" evidence="1">
    <location>
        <position position="204"/>
    </location>
</feature>
<feature type="active site" evidence="1">
    <location>
        <position position="236"/>
    </location>
</feature>
<sequence>MATTQQSGFAPAASPLASTIVQTPDDAIVAGFTSIPSQGDNMPAYHARPKQSDGPLPVVIVVQEIFGVHEHIRDICRRLALEGYLAIAPELYFREGDPNDFADIPTLLSGLVAKVPDSQVLADLDHVASWASRNGGDVHRLMITGFCWGGRITWLYAAHNPQLKAAVAWYGKLTGDKSLNSPKQPVDIATDLNAPILGLYGGQDNSIPQESVETMRQALRAANAKAEIIVYPDAGHAFNADYRPSYHAASAEDGWQRMLEWFKQYGGKKSL</sequence>
<keyword id="KW-0378">Hydrolase</keyword>
<keyword id="KW-1185">Reference proteome</keyword>
<proteinExistence type="inferred from homology"/>
<reference key="1">
    <citation type="journal article" date="1997" name="Science">
        <title>The complete genome sequence of Escherichia coli K-12.</title>
        <authorList>
            <person name="Blattner F.R."/>
            <person name="Plunkett G. III"/>
            <person name="Bloch C.A."/>
            <person name="Perna N.T."/>
            <person name="Burland V."/>
            <person name="Riley M."/>
            <person name="Collado-Vides J."/>
            <person name="Glasner J.D."/>
            <person name="Rode C.K."/>
            <person name="Mayhew G.F."/>
            <person name="Gregor J."/>
            <person name="Davis N.W."/>
            <person name="Kirkpatrick H.A."/>
            <person name="Goeden M.A."/>
            <person name="Rose D.J."/>
            <person name="Mau B."/>
            <person name="Shao Y."/>
        </authorList>
    </citation>
    <scope>NUCLEOTIDE SEQUENCE [LARGE SCALE GENOMIC DNA]</scope>
    <source>
        <strain>K12 / MG1655 / ATCC 47076</strain>
    </source>
</reference>
<reference key="2">
    <citation type="journal article" date="2006" name="Nucleic Acids Res.">
        <title>Escherichia coli K-12: a cooperatively developed annotation snapshot -- 2005.</title>
        <authorList>
            <person name="Riley M."/>
            <person name="Abe T."/>
            <person name="Arnaud M.B."/>
            <person name="Berlyn M.K.B."/>
            <person name="Blattner F.R."/>
            <person name="Chaudhuri R.R."/>
            <person name="Glasner J.D."/>
            <person name="Horiuchi T."/>
            <person name="Keseler I.M."/>
            <person name="Kosuge T."/>
            <person name="Mori H."/>
            <person name="Perna N.T."/>
            <person name="Plunkett G. III"/>
            <person name="Rudd K.E."/>
            <person name="Serres M.H."/>
            <person name="Thomas G.H."/>
            <person name="Thomson N.R."/>
            <person name="Wishart D."/>
            <person name="Wanner B.L."/>
        </authorList>
    </citation>
    <scope>SEQUENCE REVISION</scope>
</reference>
<reference key="3">
    <citation type="journal article" date="2006" name="Mol. Syst. Biol.">
        <title>Highly accurate genome sequences of Escherichia coli K-12 strains MG1655 and W3110.</title>
        <authorList>
            <person name="Hayashi K."/>
            <person name="Morooka N."/>
            <person name="Yamamoto Y."/>
            <person name="Fujita K."/>
            <person name="Isono K."/>
            <person name="Choi S."/>
            <person name="Ohtsubo E."/>
            <person name="Baba T."/>
            <person name="Wanner B.L."/>
            <person name="Mori H."/>
            <person name="Horiuchi T."/>
        </authorList>
    </citation>
    <scope>NUCLEOTIDE SEQUENCE [LARGE SCALE GENOMIC DNA]</scope>
    <source>
        <strain>K12 / W3110 / ATCC 27325 / DSM 5911</strain>
    </source>
</reference>